<protein>
    <recommendedName>
        <fullName evidence="1">Homoserine O-succinyltransferase</fullName>
        <shortName evidence="1">HST</shortName>
        <ecNumber evidence="1">2.3.1.46</ecNumber>
    </recommendedName>
    <alternativeName>
        <fullName evidence="1">Homoserine transsuccinylase</fullName>
        <shortName evidence="1">HTS</shortName>
    </alternativeName>
</protein>
<keyword id="KW-0012">Acyltransferase</keyword>
<keyword id="KW-0028">Amino-acid biosynthesis</keyword>
<keyword id="KW-0963">Cytoplasm</keyword>
<keyword id="KW-0486">Methionine biosynthesis</keyword>
<keyword id="KW-1185">Reference proteome</keyword>
<keyword id="KW-0808">Transferase</keyword>
<name>METXS_AROAE</name>
<reference key="1">
    <citation type="journal article" date="2005" name="Arch. Microbiol.">
        <title>The genome sequence of an anaerobic aromatic-degrading denitrifying bacterium, strain EbN1.</title>
        <authorList>
            <person name="Rabus R."/>
            <person name="Kube M."/>
            <person name="Heider J."/>
            <person name="Beck A."/>
            <person name="Heitmann K."/>
            <person name="Widdel F."/>
            <person name="Reinhardt R."/>
        </authorList>
    </citation>
    <scope>NUCLEOTIDE SEQUENCE [LARGE SCALE GENOMIC DNA]</scope>
    <source>
        <strain>DSM 19018 / LMG 30748 / EbN1</strain>
    </source>
</reference>
<sequence length="375" mass="41243">MIQPQSVGAVVPQRAHFAEPLPLRSGDALPEYELLYETYGELNAARSNAVLVCHALSGSHHVAGHYADDPGNIGWWDNLVGPGKPLDTRKFFVIGVNNLGGCHGTTGPASINPASGKPWGADFPFVTVEDWVAAQARLADRLGIERFAAVVGGSLGGMQALSWTLQYPERIGHAVLVASAPRLTAQNIAFNEVARQAILSDPDFHGGHYYEHGVVPARGLKLARMLGHITYLSDDAMADKFGRTLRHGKAVYSYDVEFEIESYLRYQGDKFAGFFDANTYLLTTKALDYFDPAFEHGGILRAALARASADFLVVSFSTDWRFSPARSREIVYSLLHNRRNVSYAEIESDAGHDSFLLDDAHYHELLAAYFDRIEV</sequence>
<accession>Q5P4R1</accession>
<evidence type="ECO:0000255" key="1">
    <source>
        <dbReference type="HAMAP-Rule" id="MF_00296"/>
    </source>
</evidence>
<gene>
    <name evidence="1" type="primary">metXS</name>
    <name type="ordered locus">AZOSEA15760</name>
    <name type="ORF">ebA2806</name>
</gene>
<proteinExistence type="inferred from homology"/>
<organism>
    <name type="scientific">Aromatoleum aromaticum (strain DSM 19018 / LMG 30748 / EbN1)</name>
    <name type="common">Azoarcus sp. (strain EbN1)</name>
    <dbReference type="NCBI Taxonomy" id="76114"/>
    <lineage>
        <taxon>Bacteria</taxon>
        <taxon>Pseudomonadati</taxon>
        <taxon>Pseudomonadota</taxon>
        <taxon>Betaproteobacteria</taxon>
        <taxon>Rhodocyclales</taxon>
        <taxon>Rhodocyclaceae</taxon>
        <taxon>Aromatoleum</taxon>
    </lineage>
</organism>
<feature type="chain" id="PRO_0000155703" description="Homoserine O-succinyltransferase">
    <location>
        <begin position="1"/>
        <end position="375"/>
    </location>
</feature>
<feature type="domain" description="AB hydrolase-1" evidence="1">
    <location>
        <begin position="48"/>
        <end position="358"/>
    </location>
</feature>
<feature type="active site" description="Nucleophile" evidence="1">
    <location>
        <position position="154"/>
    </location>
</feature>
<feature type="active site" evidence="1">
    <location>
        <position position="319"/>
    </location>
</feature>
<feature type="active site" evidence="1">
    <location>
        <position position="352"/>
    </location>
</feature>
<feature type="binding site" evidence="1">
    <location>
        <position position="224"/>
    </location>
    <ligand>
        <name>substrate</name>
    </ligand>
</feature>
<feature type="binding site" evidence="1">
    <location>
        <position position="353"/>
    </location>
    <ligand>
        <name>substrate</name>
    </ligand>
</feature>
<feature type="site" description="Important for acyl-CoA specificity" evidence="1">
    <location>
        <position position="321"/>
    </location>
</feature>
<dbReference type="EC" id="2.3.1.46" evidence="1"/>
<dbReference type="EMBL" id="CR555306">
    <property type="protein sequence ID" value="CAI07701.1"/>
    <property type="molecule type" value="Genomic_DNA"/>
</dbReference>
<dbReference type="RefSeq" id="WP_011237416.1">
    <property type="nucleotide sequence ID" value="NC_006513.1"/>
</dbReference>
<dbReference type="SMR" id="Q5P4R1"/>
<dbReference type="STRING" id="76114.ebA2806"/>
<dbReference type="ESTHER" id="aroae-metx">
    <property type="family name" value="Homoserine_transacetylase"/>
</dbReference>
<dbReference type="KEGG" id="eba:ebA2806"/>
<dbReference type="eggNOG" id="COG2021">
    <property type="taxonomic scope" value="Bacteria"/>
</dbReference>
<dbReference type="HOGENOM" id="CLU_028760_1_2_4"/>
<dbReference type="OrthoDB" id="9800754at2"/>
<dbReference type="UniPathway" id="UPA00051">
    <property type="reaction ID" value="UER00075"/>
</dbReference>
<dbReference type="Proteomes" id="UP000006552">
    <property type="component" value="Chromosome"/>
</dbReference>
<dbReference type="GO" id="GO:0005737">
    <property type="term" value="C:cytoplasm"/>
    <property type="evidence" value="ECO:0007669"/>
    <property type="project" value="UniProtKB-SubCell"/>
</dbReference>
<dbReference type="GO" id="GO:0004414">
    <property type="term" value="F:homoserine O-acetyltransferase activity"/>
    <property type="evidence" value="ECO:0007669"/>
    <property type="project" value="TreeGrafter"/>
</dbReference>
<dbReference type="GO" id="GO:0008899">
    <property type="term" value="F:homoserine O-succinyltransferase activity"/>
    <property type="evidence" value="ECO:0007669"/>
    <property type="project" value="UniProtKB-UniRule"/>
</dbReference>
<dbReference type="GO" id="GO:0009092">
    <property type="term" value="P:homoserine metabolic process"/>
    <property type="evidence" value="ECO:0007669"/>
    <property type="project" value="TreeGrafter"/>
</dbReference>
<dbReference type="GO" id="GO:0009086">
    <property type="term" value="P:methionine biosynthetic process"/>
    <property type="evidence" value="ECO:0007669"/>
    <property type="project" value="UniProtKB-UniRule"/>
</dbReference>
<dbReference type="FunFam" id="1.10.1740.110:FF:000001">
    <property type="entry name" value="Homoserine O-acetyltransferase"/>
    <property type="match status" value="1"/>
</dbReference>
<dbReference type="Gene3D" id="1.10.1740.110">
    <property type="match status" value="1"/>
</dbReference>
<dbReference type="Gene3D" id="3.40.50.1820">
    <property type="entry name" value="alpha/beta hydrolase"/>
    <property type="match status" value="1"/>
</dbReference>
<dbReference type="HAMAP" id="MF_00296">
    <property type="entry name" value="MetX_acyltransf"/>
    <property type="match status" value="1"/>
</dbReference>
<dbReference type="InterPro" id="IPR000073">
    <property type="entry name" value="AB_hydrolase_1"/>
</dbReference>
<dbReference type="InterPro" id="IPR029058">
    <property type="entry name" value="AB_hydrolase_fold"/>
</dbReference>
<dbReference type="InterPro" id="IPR008220">
    <property type="entry name" value="HAT_MetX-like"/>
</dbReference>
<dbReference type="NCBIfam" id="TIGR01392">
    <property type="entry name" value="homoserO_Ac_trn"/>
    <property type="match status" value="1"/>
</dbReference>
<dbReference type="NCBIfam" id="NF001209">
    <property type="entry name" value="PRK00175.1"/>
    <property type="match status" value="1"/>
</dbReference>
<dbReference type="PANTHER" id="PTHR32268">
    <property type="entry name" value="HOMOSERINE O-ACETYLTRANSFERASE"/>
    <property type="match status" value="1"/>
</dbReference>
<dbReference type="PANTHER" id="PTHR32268:SF11">
    <property type="entry name" value="HOMOSERINE O-ACETYLTRANSFERASE"/>
    <property type="match status" value="1"/>
</dbReference>
<dbReference type="Pfam" id="PF00561">
    <property type="entry name" value="Abhydrolase_1"/>
    <property type="match status" value="1"/>
</dbReference>
<dbReference type="PIRSF" id="PIRSF000443">
    <property type="entry name" value="Homoser_Ac_trans"/>
    <property type="match status" value="1"/>
</dbReference>
<dbReference type="SUPFAM" id="SSF53474">
    <property type="entry name" value="alpha/beta-Hydrolases"/>
    <property type="match status" value="1"/>
</dbReference>
<comment type="function">
    <text evidence="1">Transfers a succinyl group from succinyl-CoA to L-homoserine, forming succinyl-L-homoserine.</text>
</comment>
<comment type="catalytic activity">
    <reaction evidence="1">
        <text>L-homoserine + succinyl-CoA = O-succinyl-L-homoserine + CoA</text>
        <dbReference type="Rhea" id="RHEA:22008"/>
        <dbReference type="ChEBI" id="CHEBI:57287"/>
        <dbReference type="ChEBI" id="CHEBI:57292"/>
        <dbReference type="ChEBI" id="CHEBI:57476"/>
        <dbReference type="ChEBI" id="CHEBI:57661"/>
        <dbReference type="EC" id="2.3.1.46"/>
    </reaction>
</comment>
<comment type="pathway">
    <text evidence="1">Amino-acid biosynthesis; L-methionine biosynthesis via de novo pathway; O-succinyl-L-homoserine from L-homoserine: step 1/1.</text>
</comment>
<comment type="subunit">
    <text evidence="1">Homodimer.</text>
</comment>
<comment type="subcellular location">
    <subcellularLocation>
        <location evidence="1">Cytoplasm</location>
    </subcellularLocation>
</comment>
<comment type="similarity">
    <text evidence="1">Belongs to the AB hydrolase superfamily. MetX family.</text>
</comment>